<reference key="1">
    <citation type="journal article" date="2005" name="Plant J.">
        <title>Functional genomics uncovers three glucosyltransferases involved in the synthesis of the major sweet glucosides of Stevia rebaudiana.</title>
        <authorList>
            <person name="Richman A."/>
            <person name="Swanson A."/>
            <person name="Humphrey T."/>
            <person name="Chapman R."/>
            <person name="McGarvey B."/>
            <person name="Pocs R."/>
            <person name="Brandle J."/>
        </authorList>
    </citation>
    <scope>NUCLEOTIDE SEQUENCE [MRNA]</scope>
    <scope>FUNCTION</scope>
    <scope>CATALYTIC ACTIVITY</scope>
    <scope>BIOPHYSICOCHEMICAL PROPERTIES</scope>
    <source>
        <tissue>Leaf</tissue>
    </source>
</reference>
<reference key="2">
    <citation type="journal article" date="2017" name="Phytochemistry">
        <title>Impact of blue, red, and far-red light treatments on gene expression and steviol glycoside accumulation in Stevia rebaudiana.</title>
        <authorList>
            <person name="Yoneda Y."/>
            <person name="Nakashima H."/>
            <person name="Miyasaka J."/>
            <person name="Ohdoi K."/>
            <person name="Shimizu H."/>
        </authorList>
    </citation>
    <scope>INDUCTION</scope>
</reference>
<protein>
    <recommendedName>
        <fullName evidence="6">UDP-glycosyltransferase 85C2</fullName>
        <ecNumber evidence="4">2.4.1.-</ecNumber>
    </recommendedName>
</protein>
<organism>
    <name type="scientific">Stevia rebaudiana</name>
    <name type="common">Stevia</name>
    <name type="synonym">Eupatorium rebaudianum</name>
    <dbReference type="NCBI Taxonomy" id="55670"/>
    <lineage>
        <taxon>Eukaryota</taxon>
        <taxon>Viridiplantae</taxon>
        <taxon>Streptophyta</taxon>
        <taxon>Embryophyta</taxon>
        <taxon>Tracheophyta</taxon>
        <taxon>Spermatophyta</taxon>
        <taxon>Magnoliopsida</taxon>
        <taxon>eudicotyledons</taxon>
        <taxon>Gunneridae</taxon>
        <taxon>Pentapetalae</taxon>
        <taxon>asterids</taxon>
        <taxon>campanulids</taxon>
        <taxon>Asterales</taxon>
        <taxon>Asteraceae</taxon>
        <taxon>Asteroideae</taxon>
        <taxon>Heliantheae alliance</taxon>
        <taxon>Eupatorieae</taxon>
        <taxon>Stevia</taxon>
    </lineage>
</organism>
<sequence>MDAMATTEKKPHVIFIPFPAQSHIKAMLKLAQLLHHKGLQITFVNTDFIHNQFLESSGPHCLDGAPGFRFETIPDGVSHSPEASIPIRESLLRSIETNFLDRFIDLVTKLPDPPTCIISDGFLSVFTIDAAKKLGIPVMMYWTLAACGFMGFYHIHSLIEKGFAPLKDASYLTNGYLDTVIDWVPGMEGIRLKDFPLDWSTDLNDKVLMFTTEAPQRSHKVSHHIFHTFDELEPSIIKTLSLRYNHIYTIGPLQLLLDQIPEEKKQTGITSLHGYSLVKEEPECFQWLQSKEPNSVVYVNFGSTTVMSLEDMTEFGWGLANSNHYFLWIIRSNLVIGENAVLPPELEEHIKKRGFIASWCSQEKVLKHPSVGGFLTHCGWGSTIESLSAGVPMICWPYSWDQLTNCRYICKEWEVGLEMGTKVKRDEVKRLVQELMGEGGHKMRNKAKDWKEKARIAIAPNGSSSLNIDKMVKEITVLARN</sequence>
<accession>Q6VAB0</accession>
<name>U85C2_STERE</name>
<keyword id="KW-0328">Glycosyltransferase</keyword>
<keyword id="KW-0808">Transferase</keyword>
<dbReference type="EC" id="2.4.1.-" evidence="4"/>
<dbReference type="EMBL" id="AY345978">
    <property type="protein sequence ID" value="AAR06916.1"/>
    <property type="molecule type" value="mRNA"/>
</dbReference>
<dbReference type="SMR" id="Q6VAB0"/>
<dbReference type="CAZy" id="GT1">
    <property type="family name" value="Glycosyltransferase Family 1"/>
</dbReference>
<dbReference type="BioCyc" id="MetaCyc:MONOMER-17483"/>
<dbReference type="SABIO-RK" id="Q6VAB0"/>
<dbReference type="GO" id="GO:0080043">
    <property type="term" value="F:quercetin 3-O-glucosyltransferase activity"/>
    <property type="evidence" value="ECO:0007669"/>
    <property type="project" value="TreeGrafter"/>
</dbReference>
<dbReference type="GO" id="GO:0080044">
    <property type="term" value="F:quercetin 7-O-glucosyltransferase activity"/>
    <property type="evidence" value="ECO:0007669"/>
    <property type="project" value="TreeGrafter"/>
</dbReference>
<dbReference type="GO" id="GO:0102377">
    <property type="term" value="F:steviol 13-O glucosyltransferase activity"/>
    <property type="evidence" value="ECO:0007669"/>
    <property type="project" value="RHEA"/>
</dbReference>
<dbReference type="GO" id="GO:0102378">
    <property type="term" value="F:steviolmonoside glucosyltransferase activity"/>
    <property type="evidence" value="ECO:0007669"/>
    <property type="project" value="RHEA"/>
</dbReference>
<dbReference type="GO" id="GO:0035251">
    <property type="term" value="F:UDP-glucosyltransferase activity"/>
    <property type="evidence" value="ECO:0000314"/>
    <property type="project" value="UniProtKB"/>
</dbReference>
<dbReference type="CDD" id="cd03784">
    <property type="entry name" value="GT1_Gtf-like"/>
    <property type="match status" value="1"/>
</dbReference>
<dbReference type="FunFam" id="3.40.50.2000:FF:000027">
    <property type="entry name" value="Glycosyltransferase"/>
    <property type="match status" value="1"/>
</dbReference>
<dbReference type="FunFam" id="3.40.50.2000:FF:000065">
    <property type="entry name" value="Glycosyltransferase"/>
    <property type="match status" value="1"/>
</dbReference>
<dbReference type="Gene3D" id="3.40.50.2000">
    <property type="entry name" value="Glycogen Phosphorylase B"/>
    <property type="match status" value="2"/>
</dbReference>
<dbReference type="InterPro" id="IPR001611">
    <property type="entry name" value="Leu-rich_rpt"/>
</dbReference>
<dbReference type="InterPro" id="IPR002213">
    <property type="entry name" value="UDP_glucos_trans"/>
</dbReference>
<dbReference type="InterPro" id="IPR035595">
    <property type="entry name" value="UDP_glycos_trans_CS"/>
</dbReference>
<dbReference type="PANTHER" id="PTHR11926">
    <property type="entry name" value="GLUCOSYL/GLUCURONOSYL TRANSFERASES"/>
    <property type="match status" value="1"/>
</dbReference>
<dbReference type="PANTHER" id="PTHR11926:SF1417">
    <property type="entry name" value="UDP-GLUCURONOSYL_UDP-GLUCOSYLTRANSFERASE, UDP-GLYCOSYLTRANSFERASE FAMILY"/>
    <property type="match status" value="1"/>
</dbReference>
<dbReference type="Pfam" id="PF00201">
    <property type="entry name" value="UDPGT"/>
    <property type="match status" value="1"/>
</dbReference>
<dbReference type="SUPFAM" id="SSF53756">
    <property type="entry name" value="UDP-Glycosyltransferase/glycogen phosphorylase"/>
    <property type="match status" value="1"/>
</dbReference>
<dbReference type="PROSITE" id="PS51450">
    <property type="entry name" value="LRR"/>
    <property type="match status" value="1"/>
</dbReference>
<dbReference type="PROSITE" id="PS00375">
    <property type="entry name" value="UDPGT"/>
    <property type="match status" value="1"/>
</dbReference>
<gene>
    <name evidence="6" type="primary">UGT85C2</name>
</gene>
<proteinExistence type="evidence at protein level"/>
<evidence type="ECO:0000250" key="1">
    <source>
        <dbReference type="UniProtKB" id="A0A0A1HA03"/>
    </source>
</evidence>
<evidence type="ECO:0000250" key="2">
    <source>
        <dbReference type="UniProtKB" id="P51094"/>
    </source>
</evidence>
<evidence type="ECO:0000250" key="3">
    <source>
        <dbReference type="UniProtKB" id="Q6VAB4"/>
    </source>
</evidence>
<evidence type="ECO:0000269" key="4">
    <source>
    </source>
</evidence>
<evidence type="ECO:0000269" key="5">
    <source>
    </source>
</evidence>
<evidence type="ECO:0000303" key="6">
    <source>
    </source>
</evidence>
<evidence type="ECO:0000305" key="7"/>
<comment type="function">
    <text evidence="4">Involved in the biosynthesis of steviol glycosides in leaves (PubMed:15610349). Converts steviol to the mono-glycoside steviolmonoside (PubMed:15610349). Converts the mono-glycoside steviolmonoside to the bi-glycoside rubusoside (PubMed:15610349).</text>
</comment>
<comment type="catalytic activity">
    <reaction evidence="4">
        <text>steviol + UDP-alpha-D-glucose = steviolmonoside + UDP + H(+)</text>
        <dbReference type="Rhea" id="RHEA:61732"/>
        <dbReference type="ChEBI" id="CHEBI:15378"/>
        <dbReference type="ChEBI" id="CHEBI:58223"/>
        <dbReference type="ChEBI" id="CHEBI:58885"/>
        <dbReference type="ChEBI" id="CHEBI:145010"/>
        <dbReference type="ChEBI" id="CHEBI:145011"/>
    </reaction>
    <physiologicalReaction direction="left-to-right" evidence="4">
        <dbReference type="Rhea" id="RHEA:61733"/>
    </physiologicalReaction>
</comment>
<comment type="catalytic activity">
    <reaction evidence="4">
        <text>steviolmonoside + UDP-alpha-D-glucose = rubusoside + UDP</text>
        <dbReference type="Rhea" id="RHEA:61736"/>
        <dbReference type="ChEBI" id="CHEBI:58223"/>
        <dbReference type="ChEBI" id="CHEBI:58885"/>
        <dbReference type="ChEBI" id="CHEBI:145010"/>
        <dbReference type="ChEBI" id="CHEBI:145021"/>
    </reaction>
    <physiologicalReaction direction="left-to-right" evidence="4">
        <dbReference type="Rhea" id="RHEA:61737"/>
    </physiologicalReaction>
</comment>
<comment type="biophysicochemical properties">
    <kinetics>
        <KM evidence="4">14.3 uM for steviol</KM>
    </kinetics>
</comment>
<comment type="induction">
    <text evidence="5">Induced by blue light and red:far-red light in a ratio of 1.22.</text>
</comment>
<comment type="miscellaneous">
    <text evidence="7">Leaves of the 'sweet herb' Stevia rebaudiana contain a mix of steviol glycosides, compounds that are unique in the plant world because of their intense sweetness and high concentration in leaf tissue (Probable). Stevia leaves have been used as natural sweeteners in South America for centuries (Probable).</text>
</comment>
<comment type="similarity">
    <text evidence="7">Belongs to the UDP-glycosyltransferase family.</text>
</comment>
<feature type="chain" id="PRO_0000434470" description="UDP-glycosyltransferase 85C2">
    <location>
        <begin position="1"/>
        <end position="481"/>
    </location>
</feature>
<feature type="active site" description="Proton acceptor" evidence="3">
    <location>
        <position position="23"/>
    </location>
</feature>
<feature type="active site" description="Charge relay" evidence="3">
    <location>
        <position position="120"/>
    </location>
</feature>
<feature type="binding site" evidence="2">
    <location>
        <position position="23"/>
    </location>
    <ligand>
        <name>an anthocyanidin</name>
        <dbReference type="ChEBI" id="CHEBI:143576"/>
    </ligand>
</feature>
<feature type="binding site" evidence="1">
    <location>
        <position position="143"/>
    </location>
    <ligand>
        <name>UDP-alpha-D-glucose</name>
        <dbReference type="ChEBI" id="CHEBI:58885"/>
    </ligand>
</feature>
<feature type="binding site" evidence="1">
    <location>
        <position position="362"/>
    </location>
    <ligand>
        <name>UDP-alpha-D-glucose</name>
        <dbReference type="ChEBI" id="CHEBI:58885"/>
    </ligand>
</feature>
<feature type="binding site" evidence="1">
    <location>
        <position position="377"/>
    </location>
    <ligand>
        <name>UDP-alpha-D-glucose</name>
        <dbReference type="ChEBI" id="CHEBI:58885"/>
    </ligand>
</feature>
<feature type="binding site" evidence="1">
    <location>
        <position position="380"/>
    </location>
    <ligand>
        <name>UDP-alpha-D-glucose</name>
        <dbReference type="ChEBI" id="CHEBI:58885"/>
    </ligand>
</feature>
<feature type="binding site" evidence="1">
    <location>
        <position position="382"/>
    </location>
    <ligand>
        <name>UDP-alpha-D-glucose</name>
        <dbReference type="ChEBI" id="CHEBI:58885"/>
    </ligand>
</feature>
<feature type="binding site" evidence="1">
    <location>
        <position position="385"/>
    </location>
    <ligand>
        <name>UDP-alpha-D-glucose</name>
        <dbReference type="ChEBI" id="CHEBI:58885"/>
    </ligand>
</feature>
<feature type="binding site" evidence="1">
    <location>
        <position position="401"/>
    </location>
    <ligand>
        <name>UDP-alpha-D-glucose</name>
        <dbReference type="ChEBI" id="CHEBI:58885"/>
    </ligand>
</feature>
<feature type="binding site" evidence="1">
    <location>
        <position position="402"/>
    </location>
    <ligand>
        <name>UDP-alpha-D-glucose</name>
        <dbReference type="ChEBI" id="CHEBI:58885"/>
    </ligand>
</feature>